<name>SYE1_COXBR</name>
<dbReference type="EC" id="6.1.1.17" evidence="1"/>
<dbReference type="EMBL" id="CP000890">
    <property type="protein sequence ID" value="ABX77265.1"/>
    <property type="molecule type" value="Genomic_DNA"/>
</dbReference>
<dbReference type="SMR" id="A9NAJ6"/>
<dbReference type="KEGG" id="cbs:COXBURSA331_A0298"/>
<dbReference type="HOGENOM" id="CLU_015768_6_3_6"/>
<dbReference type="GO" id="GO:0005829">
    <property type="term" value="C:cytosol"/>
    <property type="evidence" value="ECO:0007669"/>
    <property type="project" value="TreeGrafter"/>
</dbReference>
<dbReference type="GO" id="GO:0005524">
    <property type="term" value="F:ATP binding"/>
    <property type="evidence" value="ECO:0007669"/>
    <property type="project" value="UniProtKB-UniRule"/>
</dbReference>
<dbReference type="GO" id="GO:0004818">
    <property type="term" value="F:glutamate-tRNA ligase activity"/>
    <property type="evidence" value="ECO:0007669"/>
    <property type="project" value="UniProtKB-UniRule"/>
</dbReference>
<dbReference type="GO" id="GO:0000049">
    <property type="term" value="F:tRNA binding"/>
    <property type="evidence" value="ECO:0007669"/>
    <property type="project" value="InterPro"/>
</dbReference>
<dbReference type="GO" id="GO:0008270">
    <property type="term" value="F:zinc ion binding"/>
    <property type="evidence" value="ECO:0007669"/>
    <property type="project" value="UniProtKB-UniRule"/>
</dbReference>
<dbReference type="GO" id="GO:0006424">
    <property type="term" value="P:glutamyl-tRNA aminoacylation"/>
    <property type="evidence" value="ECO:0007669"/>
    <property type="project" value="UniProtKB-UniRule"/>
</dbReference>
<dbReference type="CDD" id="cd00808">
    <property type="entry name" value="GluRS_core"/>
    <property type="match status" value="1"/>
</dbReference>
<dbReference type="FunFam" id="3.40.50.620:FF:000007">
    <property type="entry name" value="Glutamate--tRNA ligase"/>
    <property type="match status" value="1"/>
</dbReference>
<dbReference type="Gene3D" id="1.10.10.350">
    <property type="match status" value="1"/>
</dbReference>
<dbReference type="Gene3D" id="3.40.50.620">
    <property type="entry name" value="HUPs"/>
    <property type="match status" value="1"/>
</dbReference>
<dbReference type="HAMAP" id="MF_00022">
    <property type="entry name" value="Glu_tRNA_synth_type1"/>
    <property type="match status" value="1"/>
</dbReference>
<dbReference type="InterPro" id="IPR045462">
    <property type="entry name" value="aa-tRNA-synth_I_cd-bd"/>
</dbReference>
<dbReference type="InterPro" id="IPR020751">
    <property type="entry name" value="aa-tRNA-synth_I_codon-bd_sub2"/>
</dbReference>
<dbReference type="InterPro" id="IPR001412">
    <property type="entry name" value="aa-tRNA-synth_I_CS"/>
</dbReference>
<dbReference type="InterPro" id="IPR008925">
    <property type="entry name" value="aa_tRNA-synth_I_cd-bd_sf"/>
</dbReference>
<dbReference type="InterPro" id="IPR004527">
    <property type="entry name" value="Glu-tRNA-ligase_bac/mito"/>
</dbReference>
<dbReference type="InterPro" id="IPR000924">
    <property type="entry name" value="Glu/Gln-tRNA-synth"/>
</dbReference>
<dbReference type="InterPro" id="IPR020058">
    <property type="entry name" value="Glu/Gln-tRNA-synth_Ib_cat-dom"/>
</dbReference>
<dbReference type="InterPro" id="IPR049940">
    <property type="entry name" value="GluQ/Sye"/>
</dbReference>
<dbReference type="InterPro" id="IPR033910">
    <property type="entry name" value="GluRS_core"/>
</dbReference>
<dbReference type="InterPro" id="IPR014729">
    <property type="entry name" value="Rossmann-like_a/b/a_fold"/>
</dbReference>
<dbReference type="NCBIfam" id="TIGR00464">
    <property type="entry name" value="gltX_bact"/>
    <property type="match status" value="1"/>
</dbReference>
<dbReference type="PANTHER" id="PTHR43311">
    <property type="entry name" value="GLUTAMATE--TRNA LIGASE"/>
    <property type="match status" value="1"/>
</dbReference>
<dbReference type="PANTHER" id="PTHR43311:SF2">
    <property type="entry name" value="GLUTAMATE--TRNA LIGASE, MITOCHONDRIAL-RELATED"/>
    <property type="match status" value="1"/>
</dbReference>
<dbReference type="Pfam" id="PF19269">
    <property type="entry name" value="Anticodon_2"/>
    <property type="match status" value="1"/>
</dbReference>
<dbReference type="Pfam" id="PF00749">
    <property type="entry name" value="tRNA-synt_1c"/>
    <property type="match status" value="1"/>
</dbReference>
<dbReference type="PRINTS" id="PR00987">
    <property type="entry name" value="TRNASYNTHGLU"/>
</dbReference>
<dbReference type="SUPFAM" id="SSF48163">
    <property type="entry name" value="An anticodon-binding domain of class I aminoacyl-tRNA synthetases"/>
    <property type="match status" value="1"/>
</dbReference>
<dbReference type="SUPFAM" id="SSF52374">
    <property type="entry name" value="Nucleotidylyl transferase"/>
    <property type="match status" value="1"/>
</dbReference>
<dbReference type="PROSITE" id="PS00178">
    <property type="entry name" value="AA_TRNA_LIGASE_I"/>
    <property type="match status" value="1"/>
</dbReference>
<comment type="function">
    <text evidence="1">Catalyzes the attachment of glutamate to tRNA(Glu) in a two-step reaction: glutamate is first activated by ATP to form Glu-AMP and then transferred to the acceptor end of tRNA(Glu).</text>
</comment>
<comment type="catalytic activity">
    <reaction evidence="1">
        <text>tRNA(Glu) + L-glutamate + ATP = L-glutamyl-tRNA(Glu) + AMP + diphosphate</text>
        <dbReference type="Rhea" id="RHEA:23540"/>
        <dbReference type="Rhea" id="RHEA-COMP:9663"/>
        <dbReference type="Rhea" id="RHEA-COMP:9680"/>
        <dbReference type="ChEBI" id="CHEBI:29985"/>
        <dbReference type="ChEBI" id="CHEBI:30616"/>
        <dbReference type="ChEBI" id="CHEBI:33019"/>
        <dbReference type="ChEBI" id="CHEBI:78442"/>
        <dbReference type="ChEBI" id="CHEBI:78520"/>
        <dbReference type="ChEBI" id="CHEBI:456215"/>
        <dbReference type="EC" id="6.1.1.17"/>
    </reaction>
</comment>
<comment type="cofactor">
    <cofactor evidence="1">
        <name>Zn(2+)</name>
        <dbReference type="ChEBI" id="CHEBI:29105"/>
    </cofactor>
    <text evidence="1">Binds 1 zinc ion per subunit.</text>
</comment>
<comment type="subunit">
    <text evidence="1">Monomer.</text>
</comment>
<comment type="subcellular location">
    <subcellularLocation>
        <location evidence="1">Cytoplasm</location>
    </subcellularLocation>
</comment>
<comment type="similarity">
    <text evidence="1">Belongs to the class-I aminoacyl-tRNA synthetase family. Glutamate--tRNA ligase type 1 subfamily.</text>
</comment>
<reference key="1">
    <citation type="submission" date="2007-11" db="EMBL/GenBank/DDBJ databases">
        <title>Genome sequencing of phylogenetically and phenotypically diverse Coxiella burnetii isolates.</title>
        <authorList>
            <person name="Seshadri R."/>
            <person name="Samuel J.E."/>
        </authorList>
    </citation>
    <scope>NUCLEOTIDE SEQUENCE [LARGE SCALE GENOMIC DNA]</scope>
    <source>
        <strain>RSA 331 / Henzerling II</strain>
    </source>
</reference>
<keyword id="KW-0030">Aminoacyl-tRNA synthetase</keyword>
<keyword id="KW-0067">ATP-binding</keyword>
<keyword id="KW-0963">Cytoplasm</keyword>
<keyword id="KW-0436">Ligase</keyword>
<keyword id="KW-0479">Metal-binding</keyword>
<keyword id="KW-0547">Nucleotide-binding</keyword>
<keyword id="KW-0648">Protein biosynthesis</keyword>
<keyword id="KW-0862">Zinc</keyword>
<accession>A9NAJ6</accession>
<sequence>MKHIRTRFAPSPTGYLHIGGVRTALFSWLFARQNNGAFILRIEDTDVARSTQASVDAILEGLRWLQIDWNEGPYYQSQRMDRYREVIEQLVKSDDAYRCYCSKERLIKLRNTQLKNKQKPRYDGFCRDKAPRQSNEPFVIRFRNPVEGAVVFDDLIRGTISIDNRELDDLIIARSDGGPTYNLTVVVDDWDMKITHVIRGDDHINNTPRQINILHALGAELPHYGHVPMILGPDGKRLSKRHGAVSVLQYRDEGYLPEALMNYLIRLGWAHGDQEIFSREEMVQLFDISAVSRSPAAFNPEKLLWLNQHYLKTVSPTIIAEAFATQLEKAGTDLRNGPSLEQVIALQAERTKTLKEMAQRSLYFYQEVRSYDEKAARKHLLATIVEPLQRVRERLASLPSWEKEAIHEVIVETAQLHQLKLGQLAQPIRVALTGDTVSPPIDATLYLIGRDSALKRLDHAIRFIHQGMG</sequence>
<gene>
    <name evidence="1" type="primary">gltX1</name>
    <name type="ordered locus">COXBURSA331_A0298</name>
</gene>
<proteinExistence type="inferred from homology"/>
<feature type="chain" id="PRO_0000367661" description="Glutamate--tRNA ligase 1">
    <location>
        <begin position="1"/>
        <end position="469"/>
    </location>
</feature>
<feature type="short sequence motif" description="'HIGH' region" evidence="1">
    <location>
        <begin position="10"/>
        <end position="20"/>
    </location>
</feature>
<feature type="short sequence motif" description="'KMSKS' region" evidence="1">
    <location>
        <begin position="237"/>
        <end position="241"/>
    </location>
</feature>
<feature type="binding site" evidence="1">
    <location>
        <position position="99"/>
    </location>
    <ligand>
        <name>Zn(2+)</name>
        <dbReference type="ChEBI" id="CHEBI:29105"/>
    </ligand>
</feature>
<feature type="binding site" evidence="1">
    <location>
        <position position="101"/>
    </location>
    <ligand>
        <name>Zn(2+)</name>
        <dbReference type="ChEBI" id="CHEBI:29105"/>
    </ligand>
</feature>
<feature type="binding site" evidence="1">
    <location>
        <position position="126"/>
    </location>
    <ligand>
        <name>Zn(2+)</name>
        <dbReference type="ChEBI" id="CHEBI:29105"/>
    </ligand>
</feature>
<feature type="binding site" evidence="1">
    <location>
        <position position="128"/>
    </location>
    <ligand>
        <name>Zn(2+)</name>
        <dbReference type="ChEBI" id="CHEBI:29105"/>
    </ligand>
</feature>
<feature type="binding site" evidence="1">
    <location>
        <position position="240"/>
    </location>
    <ligand>
        <name>ATP</name>
        <dbReference type="ChEBI" id="CHEBI:30616"/>
    </ligand>
</feature>
<organism>
    <name type="scientific">Coxiella burnetii (strain RSA 331 / Henzerling II)</name>
    <dbReference type="NCBI Taxonomy" id="360115"/>
    <lineage>
        <taxon>Bacteria</taxon>
        <taxon>Pseudomonadati</taxon>
        <taxon>Pseudomonadota</taxon>
        <taxon>Gammaproteobacteria</taxon>
        <taxon>Legionellales</taxon>
        <taxon>Coxiellaceae</taxon>
        <taxon>Coxiella</taxon>
    </lineage>
</organism>
<evidence type="ECO:0000255" key="1">
    <source>
        <dbReference type="HAMAP-Rule" id="MF_00022"/>
    </source>
</evidence>
<protein>
    <recommendedName>
        <fullName evidence="1">Glutamate--tRNA ligase 1</fullName>
        <ecNumber evidence="1">6.1.1.17</ecNumber>
    </recommendedName>
    <alternativeName>
        <fullName evidence="1">Glutamyl-tRNA synthetase 1</fullName>
        <shortName evidence="1">GluRS 1</shortName>
    </alternativeName>
</protein>